<proteinExistence type="evidence at protein level"/>
<dbReference type="EMBL" id="AF079064">
    <property type="protein sequence ID" value="AAD47378.1"/>
    <property type="molecule type" value="mRNA"/>
</dbReference>
<dbReference type="EMBL" id="AF095780">
    <property type="protein sequence ID" value="AAF03044.1"/>
    <property type="molecule type" value="Genomic_DNA"/>
</dbReference>
<dbReference type="SMR" id="Q9TVX3"/>
<dbReference type="GO" id="GO:0005576">
    <property type="term" value="C:extracellular region"/>
    <property type="evidence" value="ECO:0007669"/>
    <property type="project" value="UniProtKB-SubCell"/>
</dbReference>
<dbReference type="GO" id="GO:0008200">
    <property type="term" value="F:ion channel inhibitor activity"/>
    <property type="evidence" value="ECO:0007669"/>
    <property type="project" value="InterPro"/>
</dbReference>
<dbReference type="GO" id="GO:0015459">
    <property type="term" value="F:potassium channel regulator activity"/>
    <property type="evidence" value="ECO:0007669"/>
    <property type="project" value="UniProtKB-KW"/>
</dbReference>
<dbReference type="GO" id="GO:0090729">
    <property type="term" value="F:toxin activity"/>
    <property type="evidence" value="ECO:0007669"/>
    <property type="project" value="UniProtKB-KW"/>
</dbReference>
<dbReference type="InterPro" id="IPR036574">
    <property type="entry name" value="Scorpion_toxin-like_sf"/>
</dbReference>
<dbReference type="InterPro" id="IPR001947">
    <property type="entry name" value="Scorpion_toxinS_K_inh"/>
</dbReference>
<dbReference type="Pfam" id="PF00451">
    <property type="entry name" value="Toxin_2"/>
    <property type="match status" value="1"/>
</dbReference>
<dbReference type="SUPFAM" id="SSF57095">
    <property type="entry name" value="Scorpion toxin-like"/>
    <property type="match status" value="1"/>
</dbReference>
<dbReference type="PROSITE" id="PS01138">
    <property type="entry name" value="SCORP_SHORT_TOXIN"/>
    <property type="match status" value="1"/>
</dbReference>
<feature type="signal peptide" evidence="4">
    <location>
        <begin position="1"/>
        <end position="28"/>
    </location>
</feature>
<feature type="chain" id="PRO_0000035324" description="Potassium channel toxin alpha-KTx 5.3" evidence="4">
    <location>
        <begin position="29"/>
        <end position="59"/>
    </location>
</feature>
<feature type="region of interest" description="[R/K]XCQ motif" evidence="6">
    <location>
        <begin position="34"/>
        <end position="37"/>
    </location>
</feature>
<feature type="modified residue" description="Histidine amide" evidence="4">
    <location>
        <position position="59"/>
    </location>
</feature>
<feature type="disulfide bond" evidence="1">
    <location>
        <begin position="31"/>
        <end position="49"/>
    </location>
</feature>
<feature type="disulfide bond" evidence="1">
    <location>
        <begin position="36"/>
        <end position="54"/>
    </location>
</feature>
<feature type="disulfide bond" evidence="1">
    <location>
        <begin position="40"/>
        <end position="56"/>
    </location>
</feature>
<feature type="mutagenesis site" description="86.4% loss of toxicity. 100% loss of toxicity; when associated with A-41." evidence="2">
    <original>K</original>
    <variation>A</variation>
    <location>
        <position position="34"/>
    </location>
</feature>
<feature type="mutagenesis site" description="97.5% loss of toxicity." evidence="2">
    <original>Q</original>
    <variation>P</variation>
    <location>
        <position position="37"/>
    </location>
</feature>
<feature type="mutagenesis site" description="83.0% loss of toxicity. 100% loss of toxicity; when associated with A-34." evidence="2">
    <original>R</original>
    <variation>A</variation>
    <location>
        <position position="41"/>
    </location>
</feature>
<feature type="mutagenesis site" description="68.4% loss of toxicity." evidence="2">
    <original>IGD</original>
    <variation>MNG</variation>
    <location>
        <begin position="50"/>
        <end position="52"/>
    </location>
</feature>
<feature type="mutagenesis site" description="55.4% loss of toxicity." evidence="2">
    <original>H</original>
    <variation>A</variation>
    <location>
        <position position="59"/>
    </location>
</feature>
<accession>Q9TVX3</accession>
<sequence length="61" mass="6808">MHNYYKIVLIMVAFFAVIITFSNIQVEGAVCNLKRCQLSCRSLGLLGKCIGDKCECVKHGK</sequence>
<name>KAX53_OLIMR</name>
<evidence type="ECO:0000250" key="1">
    <source>
        <dbReference type="UniProtKB" id="P16341"/>
    </source>
</evidence>
<evidence type="ECO:0000269" key="2">
    <source>
    </source>
</evidence>
<evidence type="ECO:0000269" key="3">
    <source>
    </source>
</evidence>
<evidence type="ECO:0000269" key="4">
    <source>
    </source>
</evidence>
<evidence type="ECO:0000303" key="5">
    <source>
    </source>
</evidence>
<evidence type="ECO:0000305" key="6"/>
<evidence type="ECO:0000305" key="7">
    <source>
    </source>
</evidence>
<organism>
    <name type="scientific">Olivierus martensii</name>
    <name type="common">Manchurian scorpion</name>
    <name type="synonym">Mesobuthus martensii</name>
    <dbReference type="NCBI Taxonomy" id="34649"/>
    <lineage>
        <taxon>Eukaryota</taxon>
        <taxon>Metazoa</taxon>
        <taxon>Ecdysozoa</taxon>
        <taxon>Arthropoda</taxon>
        <taxon>Chelicerata</taxon>
        <taxon>Arachnida</taxon>
        <taxon>Scorpiones</taxon>
        <taxon>Buthida</taxon>
        <taxon>Buthoidea</taxon>
        <taxon>Buthidae</taxon>
        <taxon>Olivierus</taxon>
    </lineage>
</organism>
<reference key="1">
    <citation type="journal article" date="1999" name="FEBS Lett.">
        <title>Genomic organization of three neurotoxins active on small conductance Ca2+-activated potassium channels from the scorpion Buthus martensi Karsch.</title>
        <authorList>
            <person name="Wu J.-J."/>
            <person name="Dai L."/>
            <person name="Lan Z.-D."/>
            <person name="Chi C.-W."/>
        </authorList>
    </citation>
    <scope>NUCLEOTIDE SEQUENCE [GENOMIC DNA / MRNA]</scope>
</reference>
<reference key="2">
    <citation type="journal article" date="1997" name="Eur. J. Biochem.">
        <title>Characterization of four toxins from Buthus martensi scorpion venom, which act on apamin-sensitive Ca2+-activated K+ channels.</title>
        <authorList>
            <person name="Romi-Lebrun R."/>
            <person name="Martin-Eauclaire M.-F."/>
            <person name="Escoubas P."/>
            <person name="Wu F.Q."/>
            <person name="Lebrun B."/>
            <person name="Hisada M."/>
            <person name="Nakajima T."/>
        </authorList>
    </citation>
    <scope>PROTEIN SEQUENCE OF 29-59</scope>
    <scope>FUNCTION</scope>
    <scope>SYNTHESIS</scope>
    <scope>AMIDATION AT HIS-59</scope>
    <scope>MASS SPECTROMETRY</scope>
    <scope>TOXIC DOSE</scope>
    <scope>SUBCELLULAR LOCATION</scope>
</reference>
<reference key="3">
    <citation type="journal article" date="2002" name="Biochemistry">
        <title>Gene expression, mutation, and structure-function relationship of scorpion toxin BmP05 active on SK(Ca) channels.</title>
        <authorList>
            <person name="Wu J.-J."/>
            <person name="He L.-L."/>
            <person name="Zhou Z."/>
            <person name="Chi C.-W."/>
        </authorList>
    </citation>
    <scope>MUTAGENESIS OF LYS-34; GLN-37; ARG-41; 50-ILE--ASP-52 AND HIS-59</scope>
    <scope>TOXIC DOSE</scope>
</reference>
<reference key="4">
    <citation type="journal article" date="2018" name="Nat. Struct. Mol. Biol.">
        <title>Screening, large-scale production and structure-based classification of cystine-dense peptides.</title>
        <authorList>
            <person name="Correnti C.E."/>
            <person name="Gewe M.M."/>
            <person name="Mehlin C."/>
            <person name="Bandaranayake A.D."/>
            <person name="Johnsen W.A."/>
            <person name="Rupert P.B."/>
            <person name="Brusniak M.Y."/>
            <person name="Clarke M."/>
            <person name="Burke S.E."/>
            <person name="De Van Der Schueren W."/>
            <person name="Pilat K."/>
            <person name="Turnbaugh S.M."/>
            <person name="May D."/>
            <person name="Watson A."/>
            <person name="Chan M.K."/>
            <person name="Bahl C.D."/>
            <person name="Olson J.M."/>
            <person name="Strong R.K."/>
        </authorList>
    </citation>
    <scope>FUNCTION</scope>
    <scope>SYNTHESIS OF 29-59</scope>
</reference>
<comment type="function">
    <text evidence="3 4">Blocks small conductance calcium-activated potassium channels (KCNN, SK) (PubMed:9151979). Has also been shown to weakly inhibit Kv11.1/KCNH2/ERG1, Kv1.2/KCNA2, Kv1.3/KCNA3 and Kv2.1/KCNB1 voltage-gated potassium channels (PubMed:29483648).</text>
</comment>
<comment type="subcellular location">
    <subcellularLocation>
        <location evidence="4">Secreted</location>
    </subcellularLocation>
</comment>
<comment type="tissue specificity">
    <text evidence="7">Expressed by the venom gland.</text>
</comment>
<comment type="domain">
    <text evidence="6">Has the structural arrangement of an alpha-helix connected to antiparallel beta-sheets by disulfide bonds (CS-alpha/beta).</text>
</comment>
<comment type="mass spectrometry" mass="3371.39" method="MALDI" evidence="4"/>
<comment type="toxic dose">
    <text evidence="2 4">LD(50) is 1.85 ug/kg by intracerebroventricular injection into mice.</text>
</comment>
<comment type="miscellaneous">
    <text evidence="2">Toxicity experiments on mutants are done without C-terminal amidation.</text>
</comment>
<comment type="similarity">
    <text evidence="6">Belongs to the short scorpion toxin superfamily. Potassium channel inhibitor family. Alpha-KTx 05 subfamily.</text>
</comment>
<protein>
    <recommendedName>
        <fullName>Potassium channel toxin alpha-KTx 5.3</fullName>
    </recommendedName>
    <alternativeName>
        <fullName evidence="5">Neurotoxin BmP05</fullName>
    </alternativeName>
    <alternativeName>
        <fullName evidence="5">Potassium ion channel blocker P05</fullName>
    </alternativeName>
</protein>
<keyword id="KW-0027">Amidation</keyword>
<keyword id="KW-1221">Calcium-activated potassium channel impairing toxin</keyword>
<keyword id="KW-0903">Direct protein sequencing</keyword>
<keyword id="KW-1015">Disulfide bond</keyword>
<keyword id="KW-0872">Ion channel impairing toxin</keyword>
<keyword id="KW-0528">Neurotoxin</keyword>
<keyword id="KW-0632">Potassium channel impairing toxin</keyword>
<keyword id="KW-0964">Secreted</keyword>
<keyword id="KW-0732">Signal</keyword>
<keyword id="KW-0800">Toxin</keyword>